<keyword id="KW-0963">Cytoplasm</keyword>
<keyword id="KW-0804">Transcription</keyword>
<keyword id="KW-0805">Transcription regulation</keyword>
<proteinExistence type="inferred from homology"/>
<name>RSD_SHIF8</name>
<sequence>MLNQLDNLTERVRGSNKLVDRWLHVRKHLLVAYYNLVGIKPGKESYMRLNEKALDDFCQSLVDYLSAGHFSIYERILHKLEGNGQLARAAKIWPQLEANTQQIMDYYDSSLETAIDHDNYLEFQQVLSDIGEALEARFVLEDKLILLVLDAARVKHPA</sequence>
<comment type="function">
    <text evidence="1">Binds RpoD and negatively regulates RpoD-mediated transcription activation by preventing the interaction between the primary sigma factor RpoD with the catalytic core of the RNA polymerase and with promoter DNA. May be involved in replacement of the RNA polymerase sigma subunit from RpoD to RpoS during the transition from exponential growth to the stationary phase.</text>
</comment>
<comment type="subunit">
    <text evidence="1">Interacts with RpoD.</text>
</comment>
<comment type="subcellular location">
    <subcellularLocation>
        <location evidence="1">Cytoplasm</location>
    </subcellularLocation>
</comment>
<comment type="similarity">
    <text evidence="1">Belongs to the Rsd/AlgQ family.</text>
</comment>
<reference key="1">
    <citation type="journal article" date="2006" name="BMC Genomics">
        <title>Complete genome sequence of Shigella flexneri 5b and comparison with Shigella flexneri 2a.</title>
        <authorList>
            <person name="Nie H."/>
            <person name="Yang F."/>
            <person name="Zhang X."/>
            <person name="Yang J."/>
            <person name="Chen L."/>
            <person name="Wang J."/>
            <person name="Xiong Z."/>
            <person name="Peng J."/>
            <person name="Sun L."/>
            <person name="Dong J."/>
            <person name="Xue Y."/>
            <person name="Xu X."/>
            <person name="Chen S."/>
            <person name="Yao Z."/>
            <person name="Shen Y."/>
            <person name="Jin Q."/>
        </authorList>
    </citation>
    <scope>NUCLEOTIDE SEQUENCE [LARGE SCALE GENOMIC DNA]</scope>
    <source>
        <strain>8401</strain>
    </source>
</reference>
<dbReference type="EMBL" id="CP000266">
    <property type="protein sequence ID" value="ABF06060.1"/>
    <property type="molecule type" value="Genomic_DNA"/>
</dbReference>
<dbReference type="RefSeq" id="WP_000934302.1">
    <property type="nucleotide sequence ID" value="NC_008258.1"/>
</dbReference>
<dbReference type="SMR" id="Q0SY05"/>
<dbReference type="GeneID" id="75205513"/>
<dbReference type="KEGG" id="sfv:SFV_4067"/>
<dbReference type="HOGENOM" id="CLU_142729_0_0_6"/>
<dbReference type="Proteomes" id="UP000000659">
    <property type="component" value="Chromosome"/>
</dbReference>
<dbReference type="GO" id="GO:0005737">
    <property type="term" value="C:cytoplasm"/>
    <property type="evidence" value="ECO:0007669"/>
    <property type="project" value="UniProtKB-SubCell"/>
</dbReference>
<dbReference type="GO" id="GO:0006355">
    <property type="term" value="P:regulation of DNA-templated transcription"/>
    <property type="evidence" value="ECO:0007669"/>
    <property type="project" value="InterPro"/>
</dbReference>
<dbReference type="FunFam" id="1.20.120.1370:FF:000001">
    <property type="entry name" value="Regulator of sigma D"/>
    <property type="match status" value="1"/>
</dbReference>
<dbReference type="Gene3D" id="1.20.120.1370">
    <property type="entry name" value="Regulator of RNA polymerase sigma(70) subunit, domain 4"/>
    <property type="match status" value="1"/>
</dbReference>
<dbReference type="HAMAP" id="MF_01181">
    <property type="entry name" value="Rsd"/>
    <property type="match status" value="1"/>
</dbReference>
<dbReference type="InterPro" id="IPR038309">
    <property type="entry name" value="Rsd/AlgQ_sf"/>
</dbReference>
<dbReference type="InterPro" id="IPR023785">
    <property type="entry name" value="Sigma70_reg_Rsd"/>
</dbReference>
<dbReference type="InterPro" id="IPR007448">
    <property type="entry name" value="Sigma70_reg_Rsd_AlgQ"/>
</dbReference>
<dbReference type="NCBIfam" id="NF008723">
    <property type="entry name" value="PRK11718.1"/>
    <property type="match status" value="1"/>
</dbReference>
<dbReference type="Pfam" id="PF04353">
    <property type="entry name" value="Rsd_AlgQ"/>
    <property type="match status" value="1"/>
</dbReference>
<dbReference type="PIRSF" id="PIRSF016548">
    <property type="entry name" value="Rsd_AlgQ"/>
    <property type="match status" value="1"/>
</dbReference>
<protein>
    <recommendedName>
        <fullName evidence="1">Regulator of sigma D</fullName>
    </recommendedName>
</protein>
<evidence type="ECO:0000255" key="1">
    <source>
        <dbReference type="HAMAP-Rule" id="MF_01181"/>
    </source>
</evidence>
<organism>
    <name type="scientific">Shigella flexneri serotype 5b (strain 8401)</name>
    <dbReference type="NCBI Taxonomy" id="373384"/>
    <lineage>
        <taxon>Bacteria</taxon>
        <taxon>Pseudomonadati</taxon>
        <taxon>Pseudomonadota</taxon>
        <taxon>Gammaproteobacteria</taxon>
        <taxon>Enterobacterales</taxon>
        <taxon>Enterobacteriaceae</taxon>
        <taxon>Shigella</taxon>
    </lineage>
</organism>
<accession>Q0SY05</accession>
<feature type="chain" id="PRO_1000065797" description="Regulator of sigma D">
    <location>
        <begin position="1"/>
        <end position="158"/>
    </location>
</feature>
<gene>
    <name evidence="1" type="primary">rsd</name>
    <name type="ordered locus">SFV_4067</name>
</gene>